<sequence>MFDKKLLESSELYDKRYRNFSTLIILPLFILLVGGVIFTFFAHKELTVISTGSIEPTKIVAKIQSTNANPIIENNLKEGKVVKENSLLLKYNGTPEQTQLSELLTQKKQVLDKKAQLDLLQKSLTNEKNEFPTTDSFGYEKSFENYESQVKSLEATIQKSNQAVEDQNKSTESQKQAIQNQVATLQQAIQNYSEIENAVSSGGGVSQDNPYLSQYNSYQAQQATLEADLKNQKNPDETAKQATKSQEESLKSQFLSGLASSKDSLKSQIQSFNVQESSLTGSNAYDNSQSSQILTLKTQALSASNKEMTDLNSTLTDLETKISLQKQDDQYSQVFAEQTGVLHVLPDILGMKKIPIGTPIAEIYPLLKAETQVNLTSYIPSTQISGMKVGQKVRFTVQQNLPKPEILTGIIKQIDSAPTAFKEGNAYKVSATTAINAKDLPNIRYGLQGKTVTIIGKKTYFNYFLDKIMGRTS</sequence>
<keyword id="KW-0080">Bacteriocin transport</keyword>
<keyword id="KW-1003">Cell membrane</keyword>
<keyword id="KW-0472">Membrane</keyword>
<keyword id="KW-0653">Protein transport</keyword>
<keyword id="KW-1185">Reference proteome</keyword>
<keyword id="KW-0812">Transmembrane</keyword>
<keyword id="KW-1133">Transmembrane helix</keyword>
<keyword id="KW-0813">Transport</keyword>
<accession>Q9CJB7</accession>
<dbReference type="EMBL" id="AE005176">
    <property type="protein sequence ID" value="AAK04178.1"/>
    <property type="molecule type" value="Genomic_DNA"/>
</dbReference>
<dbReference type="PIR" id="H86634">
    <property type="entry name" value="H86634"/>
</dbReference>
<dbReference type="RefSeq" id="NP_266236.1">
    <property type="nucleotide sequence ID" value="NC_002662.1"/>
</dbReference>
<dbReference type="RefSeq" id="WP_010905095.1">
    <property type="nucleotide sequence ID" value="NC_002662.1"/>
</dbReference>
<dbReference type="SMR" id="Q9CJB7"/>
<dbReference type="PaxDb" id="272623-L84721"/>
<dbReference type="EnsemblBacteria" id="AAK04178">
    <property type="protein sequence ID" value="AAK04178"/>
    <property type="gene ID" value="L84721"/>
</dbReference>
<dbReference type="KEGG" id="lla:L84721"/>
<dbReference type="PATRIC" id="fig|272623.7.peg.89"/>
<dbReference type="eggNOG" id="COG0845">
    <property type="taxonomic scope" value="Bacteria"/>
</dbReference>
<dbReference type="HOGENOM" id="CLU_047946_0_0_9"/>
<dbReference type="OrthoDB" id="2237368at2"/>
<dbReference type="Proteomes" id="UP000002196">
    <property type="component" value="Chromosome"/>
</dbReference>
<dbReference type="GO" id="GO:0005886">
    <property type="term" value="C:plasma membrane"/>
    <property type="evidence" value="ECO:0007669"/>
    <property type="project" value="UniProtKB-SubCell"/>
</dbReference>
<dbReference type="GO" id="GO:0043213">
    <property type="term" value="P:bacteriocin transport"/>
    <property type="evidence" value="ECO:0007669"/>
    <property type="project" value="UniProtKB-KW"/>
</dbReference>
<dbReference type="GO" id="GO:0009306">
    <property type="term" value="P:protein secretion"/>
    <property type="evidence" value="ECO:0007669"/>
    <property type="project" value="InterPro"/>
</dbReference>
<dbReference type="Gene3D" id="2.40.30.170">
    <property type="match status" value="1"/>
</dbReference>
<dbReference type="InterPro" id="IPR005696">
    <property type="entry name" value="MesE/LcnD"/>
</dbReference>
<dbReference type="InterPro" id="IPR050739">
    <property type="entry name" value="MFP"/>
</dbReference>
<dbReference type="InterPro" id="IPR006144">
    <property type="entry name" value="Secretion_HlyD_CS"/>
</dbReference>
<dbReference type="NCBIfam" id="TIGR01000">
    <property type="entry name" value="bacteriocin_acc"/>
    <property type="match status" value="1"/>
</dbReference>
<dbReference type="PANTHER" id="PTHR30386">
    <property type="entry name" value="MEMBRANE FUSION SUBUNIT OF EMRAB-TOLC MULTIDRUG EFFLUX PUMP"/>
    <property type="match status" value="1"/>
</dbReference>
<dbReference type="PANTHER" id="PTHR30386:SF26">
    <property type="entry name" value="TRANSPORT PROTEIN COMB"/>
    <property type="match status" value="1"/>
</dbReference>
<dbReference type="Pfam" id="PF13437">
    <property type="entry name" value="HlyD_3"/>
    <property type="match status" value="1"/>
</dbReference>
<dbReference type="PROSITE" id="PS00543">
    <property type="entry name" value="HLYD_FAMILY"/>
    <property type="match status" value="1"/>
</dbReference>
<gene>
    <name type="primary">lcnD</name>
    <name type="ordered locus">LL0080</name>
    <name type="ORF">L84721</name>
</gene>
<evidence type="ECO:0000255" key="1"/>
<evidence type="ECO:0000305" key="2"/>
<name>LCNDL_LACLA</name>
<feature type="chain" id="PRO_0000201880" description="Lactococcin A secretion protein LcnD-like">
    <location>
        <begin position="1"/>
        <end position="473"/>
    </location>
</feature>
<feature type="topological domain" description="Cytoplasmic" evidence="1">
    <location>
        <begin position="1"/>
        <end position="21"/>
    </location>
</feature>
<feature type="transmembrane region" description="Helical" evidence="1">
    <location>
        <begin position="22"/>
        <end position="44"/>
    </location>
</feature>
<feature type="topological domain" description="Extracellular" evidence="1">
    <location>
        <begin position="45"/>
        <end position="473"/>
    </location>
</feature>
<proteinExistence type="inferred from homology"/>
<organism>
    <name type="scientific">Lactococcus lactis subsp. lactis (strain IL1403)</name>
    <name type="common">Streptococcus lactis</name>
    <dbReference type="NCBI Taxonomy" id="272623"/>
    <lineage>
        <taxon>Bacteria</taxon>
        <taxon>Bacillati</taxon>
        <taxon>Bacillota</taxon>
        <taxon>Bacilli</taxon>
        <taxon>Lactobacillales</taxon>
        <taxon>Streptococcaceae</taxon>
        <taxon>Lactococcus</taxon>
    </lineage>
</organism>
<comment type="function">
    <text evidence="2">Involved in the secretion of a lactococcin.</text>
</comment>
<comment type="subcellular location">
    <subcellularLocation>
        <location>Cell membrane</location>
        <topology>Single-pass type II membrane protein</topology>
    </subcellularLocation>
</comment>
<comment type="similarity">
    <text evidence="2">Belongs to the membrane fusion protein (MFP) (TC 8.A.1) family.</text>
</comment>
<reference key="1">
    <citation type="journal article" date="2001" name="Genome Res.">
        <title>The complete genome sequence of the lactic acid bacterium Lactococcus lactis ssp. lactis IL1403.</title>
        <authorList>
            <person name="Bolotin A."/>
            <person name="Wincker P."/>
            <person name="Mauger S."/>
            <person name="Jaillon O."/>
            <person name="Malarme K."/>
            <person name="Weissenbach J."/>
            <person name="Ehrlich S.D."/>
            <person name="Sorokin A."/>
        </authorList>
    </citation>
    <scope>NUCLEOTIDE SEQUENCE [LARGE SCALE GENOMIC DNA]</scope>
    <source>
        <strain>IL1403</strain>
    </source>
</reference>
<protein>
    <recommendedName>
        <fullName>Lactococcin A secretion protein LcnD-like</fullName>
    </recommendedName>
</protein>